<comment type="subcellular location">
    <subcellularLocation>
        <location>Plastid</location>
        <location>Chloroplast</location>
    </subcellularLocation>
</comment>
<comment type="similarity">
    <text evidence="1">Belongs to the bacterial ribosomal protein bL36 family.</text>
</comment>
<gene>
    <name evidence="1" type="primary">rpl36</name>
</gene>
<organism>
    <name type="scientific">Buxus microphylla</name>
    <name type="common">Littleleaf boxwood</name>
    <name type="synonym">Japanese boxwood</name>
    <dbReference type="NCBI Taxonomy" id="153571"/>
    <lineage>
        <taxon>Eukaryota</taxon>
        <taxon>Viridiplantae</taxon>
        <taxon>Streptophyta</taxon>
        <taxon>Embryophyta</taxon>
        <taxon>Tracheophyta</taxon>
        <taxon>Spermatophyta</taxon>
        <taxon>Magnoliopsida</taxon>
        <taxon>Buxales</taxon>
        <taxon>Buxaceae</taxon>
        <taxon>Buxus</taxon>
    </lineage>
</organism>
<keyword id="KW-0150">Chloroplast</keyword>
<keyword id="KW-0934">Plastid</keyword>
<keyword id="KW-0687">Ribonucleoprotein</keyword>
<keyword id="KW-0689">Ribosomal protein</keyword>
<accession>A6MM70</accession>
<sequence>MKIRASVRKICEKCRLIRRRGRIIVICSNPRHKQRQG</sequence>
<dbReference type="EMBL" id="EF380351">
    <property type="protein sequence ID" value="ABQ45282.1"/>
    <property type="molecule type" value="Genomic_DNA"/>
</dbReference>
<dbReference type="RefSeq" id="YP_001294218.1">
    <property type="nucleotide sequence ID" value="NC_009599.1"/>
</dbReference>
<dbReference type="SMR" id="A6MM70"/>
<dbReference type="GeneID" id="5236908"/>
<dbReference type="GO" id="GO:0009507">
    <property type="term" value="C:chloroplast"/>
    <property type="evidence" value="ECO:0007669"/>
    <property type="project" value="UniProtKB-SubCell"/>
</dbReference>
<dbReference type="GO" id="GO:1990904">
    <property type="term" value="C:ribonucleoprotein complex"/>
    <property type="evidence" value="ECO:0007669"/>
    <property type="project" value="UniProtKB-KW"/>
</dbReference>
<dbReference type="GO" id="GO:0005840">
    <property type="term" value="C:ribosome"/>
    <property type="evidence" value="ECO:0007669"/>
    <property type="project" value="UniProtKB-KW"/>
</dbReference>
<dbReference type="GO" id="GO:0003735">
    <property type="term" value="F:structural constituent of ribosome"/>
    <property type="evidence" value="ECO:0007669"/>
    <property type="project" value="InterPro"/>
</dbReference>
<dbReference type="GO" id="GO:0006412">
    <property type="term" value="P:translation"/>
    <property type="evidence" value="ECO:0007669"/>
    <property type="project" value="UniProtKB-UniRule"/>
</dbReference>
<dbReference type="HAMAP" id="MF_00251">
    <property type="entry name" value="Ribosomal_bL36"/>
    <property type="match status" value="1"/>
</dbReference>
<dbReference type="InterPro" id="IPR000473">
    <property type="entry name" value="Ribosomal_bL36"/>
</dbReference>
<dbReference type="InterPro" id="IPR035977">
    <property type="entry name" value="Ribosomal_bL36_sp"/>
</dbReference>
<dbReference type="NCBIfam" id="TIGR01022">
    <property type="entry name" value="rpmJ_bact"/>
    <property type="match status" value="1"/>
</dbReference>
<dbReference type="PANTHER" id="PTHR42888">
    <property type="entry name" value="50S RIBOSOMAL PROTEIN L36, CHLOROPLASTIC"/>
    <property type="match status" value="1"/>
</dbReference>
<dbReference type="PANTHER" id="PTHR42888:SF1">
    <property type="entry name" value="LARGE RIBOSOMAL SUBUNIT PROTEIN BL36C"/>
    <property type="match status" value="1"/>
</dbReference>
<dbReference type="Pfam" id="PF00444">
    <property type="entry name" value="Ribosomal_L36"/>
    <property type="match status" value="1"/>
</dbReference>
<dbReference type="SUPFAM" id="SSF57840">
    <property type="entry name" value="Ribosomal protein L36"/>
    <property type="match status" value="1"/>
</dbReference>
<dbReference type="PROSITE" id="PS00828">
    <property type="entry name" value="RIBOSOMAL_L36"/>
    <property type="match status" value="1"/>
</dbReference>
<evidence type="ECO:0000255" key="1">
    <source>
        <dbReference type="HAMAP-Rule" id="MF_00251"/>
    </source>
</evidence>
<evidence type="ECO:0000305" key="2"/>
<proteinExistence type="inferred from homology"/>
<feature type="chain" id="PRO_0000344745" description="Large ribosomal subunit protein bL36c">
    <location>
        <begin position="1"/>
        <end position="37"/>
    </location>
</feature>
<reference key="1">
    <citation type="journal article" date="2007" name="Mol. Phylogenet. Evol.">
        <title>Phylogenetic and evolutionary implications of complete chloroplast genome sequences of four early-diverging angiosperms: Buxus (Buxaceae), Chloranthus (Chloranthaceae), Dioscorea (Dioscoreaceae), and Illicium (Schisandraceae).</title>
        <authorList>
            <person name="Hansen D.R."/>
            <person name="Dastidar S.G."/>
            <person name="Cai Z."/>
            <person name="Penaflor C."/>
            <person name="Kuehl J.V."/>
            <person name="Boore J.L."/>
            <person name="Jansen R.K."/>
        </authorList>
    </citation>
    <scope>NUCLEOTIDE SEQUENCE [LARGE SCALE GENOMIC DNA]</scope>
</reference>
<protein>
    <recommendedName>
        <fullName evidence="1">Large ribosomal subunit protein bL36c</fullName>
    </recommendedName>
    <alternativeName>
        <fullName evidence="2">50S ribosomal protein L36, chloroplastic</fullName>
    </alternativeName>
</protein>
<geneLocation type="chloroplast"/>
<name>RK36_BUXMI</name>